<comment type="function">
    <text evidence="1">Catalyzes the conversion of uracil and 5-phospho-alpha-D-ribose 1-diphosphate (PRPP) to UMP and diphosphate.</text>
</comment>
<comment type="catalytic activity">
    <reaction evidence="1">
        <text>UMP + diphosphate = 5-phospho-alpha-D-ribose 1-diphosphate + uracil</text>
        <dbReference type="Rhea" id="RHEA:13017"/>
        <dbReference type="ChEBI" id="CHEBI:17568"/>
        <dbReference type="ChEBI" id="CHEBI:33019"/>
        <dbReference type="ChEBI" id="CHEBI:57865"/>
        <dbReference type="ChEBI" id="CHEBI:58017"/>
        <dbReference type="EC" id="2.4.2.9"/>
    </reaction>
</comment>
<comment type="cofactor">
    <cofactor evidence="1">
        <name>Mg(2+)</name>
        <dbReference type="ChEBI" id="CHEBI:18420"/>
    </cofactor>
    <text evidence="1">Binds 1 Mg(2+) ion per subunit. The magnesium is bound as Mg-PRPP.</text>
</comment>
<comment type="activity regulation">
    <text evidence="1">Allosterically activated by GTP.</text>
</comment>
<comment type="pathway">
    <text evidence="1">Pyrimidine metabolism; UMP biosynthesis via salvage pathway; UMP from uracil: step 1/1.</text>
</comment>
<comment type="similarity">
    <text evidence="1">Belongs to the UPRTase family.</text>
</comment>
<reference key="1">
    <citation type="submission" date="2007-08" db="EMBL/GenBank/DDBJ databases">
        <title>Complete sequence of Roseiflexus castenholzii DSM 13941.</title>
        <authorList>
            <consortium name="US DOE Joint Genome Institute"/>
            <person name="Copeland A."/>
            <person name="Lucas S."/>
            <person name="Lapidus A."/>
            <person name="Barry K."/>
            <person name="Glavina del Rio T."/>
            <person name="Dalin E."/>
            <person name="Tice H."/>
            <person name="Pitluck S."/>
            <person name="Thompson L.S."/>
            <person name="Brettin T."/>
            <person name="Bruce D."/>
            <person name="Detter J.C."/>
            <person name="Han C."/>
            <person name="Tapia R."/>
            <person name="Schmutz J."/>
            <person name="Larimer F."/>
            <person name="Land M."/>
            <person name="Hauser L."/>
            <person name="Kyrpides N."/>
            <person name="Mikhailova N."/>
            <person name="Bryant D.A."/>
            <person name="Hanada S."/>
            <person name="Tsukatani Y."/>
            <person name="Richardson P."/>
        </authorList>
    </citation>
    <scope>NUCLEOTIDE SEQUENCE [LARGE SCALE GENOMIC DNA]</scope>
    <source>
        <strain>DSM 13941 / HLO8</strain>
    </source>
</reference>
<feature type="chain" id="PRO_1000085633" description="Uracil phosphoribosyltransferase">
    <location>
        <begin position="1"/>
        <end position="208"/>
    </location>
</feature>
<feature type="binding site" evidence="1">
    <location>
        <position position="78"/>
    </location>
    <ligand>
        <name>5-phospho-alpha-D-ribose 1-diphosphate</name>
        <dbReference type="ChEBI" id="CHEBI:58017"/>
    </ligand>
</feature>
<feature type="binding site" evidence="1">
    <location>
        <position position="103"/>
    </location>
    <ligand>
        <name>5-phospho-alpha-D-ribose 1-diphosphate</name>
        <dbReference type="ChEBI" id="CHEBI:58017"/>
    </ligand>
</feature>
<feature type="binding site" evidence="1">
    <location>
        <begin position="130"/>
        <end position="138"/>
    </location>
    <ligand>
        <name>5-phospho-alpha-D-ribose 1-diphosphate</name>
        <dbReference type="ChEBI" id="CHEBI:58017"/>
    </ligand>
</feature>
<feature type="binding site" evidence="1">
    <location>
        <position position="193"/>
    </location>
    <ligand>
        <name>uracil</name>
        <dbReference type="ChEBI" id="CHEBI:17568"/>
    </ligand>
</feature>
<feature type="binding site" evidence="1">
    <location>
        <begin position="198"/>
        <end position="200"/>
    </location>
    <ligand>
        <name>uracil</name>
        <dbReference type="ChEBI" id="CHEBI:17568"/>
    </ligand>
</feature>
<feature type="binding site" evidence="1">
    <location>
        <position position="199"/>
    </location>
    <ligand>
        <name>5-phospho-alpha-D-ribose 1-diphosphate</name>
        <dbReference type="ChEBI" id="CHEBI:58017"/>
    </ligand>
</feature>
<dbReference type="EC" id="2.4.2.9" evidence="1"/>
<dbReference type="EMBL" id="CP000804">
    <property type="protein sequence ID" value="ABU60102.1"/>
    <property type="molecule type" value="Genomic_DNA"/>
</dbReference>
<dbReference type="RefSeq" id="WP_012122523.1">
    <property type="nucleotide sequence ID" value="NC_009767.1"/>
</dbReference>
<dbReference type="SMR" id="A7NRA6"/>
<dbReference type="STRING" id="383372.Rcas_4070"/>
<dbReference type="KEGG" id="rca:Rcas_4070"/>
<dbReference type="eggNOG" id="COG0035">
    <property type="taxonomic scope" value="Bacteria"/>
</dbReference>
<dbReference type="HOGENOM" id="CLU_067096_2_2_0"/>
<dbReference type="OrthoDB" id="9781675at2"/>
<dbReference type="UniPathway" id="UPA00574">
    <property type="reaction ID" value="UER00636"/>
</dbReference>
<dbReference type="Proteomes" id="UP000000263">
    <property type="component" value="Chromosome"/>
</dbReference>
<dbReference type="GO" id="GO:0005525">
    <property type="term" value="F:GTP binding"/>
    <property type="evidence" value="ECO:0007669"/>
    <property type="project" value="UniProtKB-KW"/>
</dbReference>
<dbReference type="GO" id="GO:0000287">
    <property type="term" value="F:magnesium ion binding"/>
    <property type="evidence" value="ECO:0007669"/>
    <property type="project" value="UniProtKB-UniRule"/>
</dbReference>
<dbReference type="GO" id="GO:0004845">
    <property type="term" value="F:uracil phosphoribosyltransferase activity"/>
    <property type="evidence" value="ECO:0007669"/>
    <property type="project" value="UniProtKB-UniRule"/>
</dbReference>
<dbReference type="GO" id="GO:0044206">
    <property type="term" value="P:UMP salvage"/>
    <property type="evidence" value="ECO:0007669"/>
    <property type="project" value="UniProtKB-UniRule"/>
</dbReference>
<dbReference type="GO" id="GO:0006223">
    <property type="term" value="P:uracil salvage"/>
    <property type="evidence" value="ECO:0007669"/>
    <property type="project" value="InterPro"/>
</dbReference>
<dbReference type="CDD" id="cd06223">
    <property type="entry name" value="PRTases_typeI"/>
    <property type="match status" value="1"/>
</dbReference>
<dbReference type="FunFam" id="3.40.50.2020:FF:000003">
    <property type="entry name" value="Uracil phosphoribosyltransferase"/>
    <property type="match status" value="1"/>
</dbReference>
<dbReference type="Gene3D" id="3.40.50.2020">
    <property type="match status" value="1"/>
</dbReference>
<dbReference type="HAMAP" id="MF_01218_B">
    <property type="entry name" value="Upp_B"/>
    <property type="match status" value="1"/>
</dbReference>
<dbReference type="InterPro" id="IPR000836">
    <property type="entry name" value="PRibTrfase_dom"/>
</dbReference>
<dbReference type="InterPro" id="IPR029057">
    <property type="entry name" value="PRTase-like"/>
</dbReference>
<dbReference type="InterPro" id="IPR034332">
    <property type="entry name" value="Upp_B"/>
</dbReference>
<dbReference type="InterPro" id="IPR050054">
    <property type="entry name" value="UPRTase/APRTase"/>
</dbReference>
<dbReference type="InterPro" id="IPR005765">
    <property type="entry name" value="Ura_phspho_trans"/>
</dbReference>
<dbReference type="NCBIfam" id="NF001097">
    <property type="entry name" value="PRK00129.1"/>
    <property type="match status" value="1"/>
</dbReference>
<dbReference type="NCBIfam" id="TIGR01091">
    <property type="entry name" value="upp"/>
    <property type="match status" value="1"/>
</dbReference>
<dbReference type="PANTHER" id="PTHR32315">
    <property type="entry name" value="ADENINE PHOSPHORIBOSYLTRANSFERASE"/>
    <property type="match status" value="1"/>
</dbReference>
<dbReference type="PANTHER" id="PTHR32315:SF4">
    <property type="entry name" value="URACIL PHOSPHORIBOSYLTRANSFERASE, CHLOROPLASTIC"/>
    <property type="match status" value="1"/>
</dbReference>
<dbReference type="Pfam" id="PF14681">
    <property type="entry name" value="UPRTase"/>
    <property type="match status" value="1"/>
</dbReference>
<dbReference type="SUPFAM" id="SSF53271">
    <property type="entry name" value="PRTase-like"/>
    <property type="match status" value="1"/>
</dbReference>
<proteinExistence type="inferred from homology"/>
<organism>
    <name type="scientific">Roseiflexus castenholzii (strain DSM 13941 / HLO8)</name>
    <dbReference type="NCBI Taxonomy" id="383372"/>
    <lineage>
        <taxon>Bacteria</taxon>
        <taxon>Bacillati</taxon>
        <taxon>Chloroflexota</taxon>
        <taxon>Chloroflexia</taxon>
        <taxon>Chloroflexales</taxon>
        <taxon>Roseiflexineae</taxon>
        <taxon>Roseiflexaceae</taxon>
        <taxon>Roseiflexus</taxon>
    </lineage>
</organism>
<name>UPP_ROSCS</name>
<protein>
    <recommendedName>
        <fullName evidence="1">Uracil phosphoribosyltransferase</fullName>
        <ecNumber evidence="1">2.4.2.9</ecNumber>
    </recommendedName>
    <alternativeName>
        <fullName evidence="1">UMP pyrophosphorylase</fullName>
    </alternativeName>
    <alternativeName>
        <fullName evidence="1">UPRTase</fullName>
    </alternativeName>
</protein>
<sequence>MKQVFISQHPLVHHKLTLLRRATTEPKKFRELVSELSQFLLYEATLDLPLQERAIDTPLAPYHGHQIAERIGLVPILRAGLGMVDPILDLIPTAHVWHLGLYRDHATLQPVTYYNKLPPEVDVDLCLVLDPMLATGGSAVAAVSILKEWGASRIKFLGLIAAPEGVRALHEAHPNVPIHLAALDDHLNDRGYIVPGLGDAGDRLFGTG</sequence>
<gene>
    <name evidence="1" type="primary">upp</name>
    <name type="ordered locus">Rcas_4070</name>
</gene>
<accession>A7NRA6</accession>
<evidence type="ECO:0000255" key="1">
    <source>
        <dbReference type="HAMAP-Rule" id="MF_01218"/>
    </source>
</evidence>
<keyword id="KW-0021">Allosteric enzyme</keyword>
<keyword id="KW-0328">Glycosyltransferase</keyword>
<keyword id="KW-0342">GTP-binding</keyword>
<keyword id="KW-0460">Magnesium</keyword>
<keyword id="KW-0547">Nucleotide-binding</keyword>
<keyword id="KW-1185">Reference proteome</keyword>
<keyword id="KW-0808">Transferase</keyword>